<protein>
    <recommendedName>
        <fullName>Docking protein 6</fullName>
    </recommendedName>
    <alternativeName>
        <fullName>Downstream of tyrosine kinase 6</fullName>
    </alternativeName>
</protein>
<keyword id="KW-0597">Phosphoprotein</keyword>
<keyword id="KW-1267">Proteomics identification</keyword>
<keyword id="KW-1185">Reference proteome</keyword>
<feature type="chain" id="PRO_0000187279" description="Docking protein 6">
    <location>
        <begin position="1"/>
        <end position="331"/>
    </location>
</feature>
<feature type="domain" description="PH">
    <location>
        <begin position="8"/>
        <end position="112"/>
    </location>
</feature>
<feature type="domain" description="IRS-type PTB" evidence="2">
    <location>
        <begin position="132"/>
        <end position="237"/>
    </location>
</feature>
<feature type="region of interest" description="Disordered" evidence="3">
    <location>
        <begin position="293"/>
        <end position="331"/>
    </location>
</feature>
<feature type="short sequence motif" description="DKFBH motif">
    <location>
        <begin position="263"/>
        <end position="273"/>
    </location>
</feature>
<feature type="compositionally biased region" description="Low complexity" evidence="3">
    <location>
        <begin position="316"/>
        <end position="331"/>
    </location>
</feature>
<feature type="sequence conflict" description="In Ref. 5; BAB71577." evidence="5" ref="5">
    <original>M</original>
    <variation>V</variation>
    <location>
        <position position="238"/>
    </location>
</feature>
<accession>Q6PKX4</accession>
<accession>A6NNG3</accession>
<accession>Q4V9S3</accession>
<accession>Q8WUZ8</accession>
<accession>Q96HI2</accession>
<accession>Q96LU2</accession>
<comment type="function">
    <text evidence="4">DOK proteins are enzymatically inert adaptor or scaffolding proteins. They provide a docking platform for the assembly of multimolecular signaling complexes. DOK6 promotes Ret-mediated neurite growth. May have a role in brain development and/or maintenance.</text>
</comment>
<comment type="subunit">
    <text evidence="4">Interacts via its PTB domain with phosphorylated RET.</text>
</comment>
<comment type="interaction">
    <interactant intactId="EBI-2880244">
        <id>Q6PKX4</id>
    </interactant>
    <interactant intactId="EBI-12318443">
        <id>Q8NFV4-4</id>
        <label>ABHD11</label>
    </interactant>
    <organismsDiffer>false</organismsDiffer>
    <experiments>3</experiments>
</comment>
<comment type="interaction">
    <interactant intactId="EBI-2880244">
        <id>Q6PKX4</id>
    </interactant>
    <interactant intactId="EBI-948603">
        <id>Q03989</id>
        <label>ARID5A</label>
    </interactant>
    <organismsDiffer>false</organismsDiffer>
    <experiments>3</experiments>
</comment>
<comment type="interaction">
    <interactant intactId="EBI-2880244">
        <id>Q6PKX4</id>
    </interactant>
    <interactant intactId="EBI-946029">
        <id>Q6P1W5</id>
        <label>C1orf94</label>
    </interactant>
    <organismsDiffer>false</organismsDiffer>
    <experiments>3</experiments>
</comment>
<comment type="interaction">
    <interactant intactId="EBI-2880244">
        <id>Q6PKX4</id>
    </interactant>
    <interactant intactId="EBI-1965681">
        <id>P26998</id>
        <label>CRYBB3</label>
    </interactant>
    <organismsDiffer>false</organismsDiffer>
    <experiments>3</experiments>
</comment>
<comment type="interaction">
    <interactant intactId="EBI-2880244">
        <id>Q6PKX4</id>
    </interactant>
    <interactant intactId="EBI-297353">
        <id>P00533</id>
        <label>EGFR</label>
    </interactant>
    <organismsDiffer>false</organismsDiffer>
    <experiments>2</experiments>
</comment>
<comment type="interaction">
    <interactant intactId="EBI-2880244">
        <id>Q6PKX4</id>
    </interactant>
    <interactant intactId="EBI-12845222">
        <id>Q9NVL1-2</id>
        <label>FAM86C1P</label>
    </interactant>
    <organismsDiffer>false</organismsDiffer>
    <experiments>3</experiments>
</comment>
<comment type="interaction">
    <interactant intactId="EBI-2880244">
        <id>Q6PKX4</id>
    </interactant>
    <interactant intactId="EBI-9088686">
        <id>Q14847-2</id>
        <label>LASP1</label>
    </interactant>
    <organismsDiffer>false</organismsDiffer>
    <experiments>3</experiments>
</comment>
<comment type="interaction">
    <interactant intactId="EBI-2880244">
        <id>Q6PKX4</id>
    </interactant>
    <interactant intactId="EBI-10274069">
        <id>Q8TCE9</id>
        <label>LGALS14</label>
    </interactant>
    <organismsDiffer>false</organismsDiffer>
    <experiments>3</experiments>
</comment>
<comment type="interaction">
    <interactant intactId="EBI-2880244">
        <id>Q6PKX4</id>
    </interactant>
    <interactant intactId="EBI-8487781">
        <id>Q8N6F8</id>
        <label>METTL27</label>
    </interactant>
    <organismsDiffer>false</organismsDiffer>
    <experiments>3</experiments>
</comment>
<comment type="interaction">
    <interactant intactId="EBI-2880244">
        <id>Q6PKX4</id>
    </interactant>
    <interactant intactId="EBI-3936704">
        <id>Q16288</id>
        <label>NTRK3</label>
    </interactant>
    <organismsDiffer>false</organismsDiffer>
    <experiments>3</experiments>
</comment>
<comment type="interaction">
    <interactant intactId="EBI-2880244">
        <id>Q6PKX4</id>
    </interactant>
    <interactant intactId="EBI-740322">
        <id>Q93062</id>
        <label>RBPMS</label>
    </interactant>
    <organismsDiffer>false</organismsDiffer>
    <experiments>3</experiments>
</comment>
<comment type="interaction">
    <interactant intactId="EBI-2880244">
        <id>Q6PKX4</id>
    </interactant>
    <interactant intactId="EBI-6257312">
        <id>Q9BVN2</id>
        <label>RUSC1</label>
    </interactant>
    <organismsDiffer>false</organismsDiffer>
    <experiments>3</experiments>
</comment>
<comment type="interaction">
    <interactant intactId="EBI-2880244">
        <id>Q6PKX4</id>
    </interactant>
    <interactant intactId="EBI-13046630">
        <id>Q6NXT4-4</id>
        <label>SLC30A6</label>
    </interactant>
    <organismsDiffer>false</organismsDiffer>
    <experiments>3</experiments>
</comment>
<comment type="interaction">
    <interactant intactId="EBI-2880244">
        <id>Q6PKX4</id>
    </interactant>
    <interactant intactId="EBI-10191361">
        <id>Q96SF7</id>
        <label>TBX15</label>
    </interactant>
    <organismsDiffer>false</organismsDiffer>
    <experiments>3</experiments>
</comment>
<comment type="interaction">
    <interactant intactId="EBI-2880244">
        <id>Q6PKX4</id>
    </interactant>
    <interactant intactId="EBI-11741437">
        <id>Q08117-2</id>
        <label>TLE5</label>
    </interactant>
    <organismsDiffer>false</organismsDiffer>
    <experiments>3</experiments>
</comment>
<comment type="interaction">
    <interactant intactId="EBI-2880244">
        <id>Q6PKX4</id>
    </interactant>
    <interactant intactId="EBI-11975223">
        <id>Q70EL1-9</id>
        <label>USP54</label>
    </interactant>
    <organismsDiffer>false</organismsDiffer>
    <experiments>3</experiments>
</comment>
<comment type="tissue specificity">
    <text evidence="4">Highly expressed in fetal and adult brain. Highly expressed in the cerebellum. Weak expression in kidney, spinal cord and testis.</text>
</comment>
<comment type="domain">
    <text evidence="1">PTB domain mediates receptor interaction.</text>
</comment>
<comment type="PTM">
    <text evidence="4">On Ret activation, phosphorylated on one or more C-terminal tyrosine residues by an Src family kinase.</text>
</comment>
<comment type="similarity">
    <text evidence="5">Belongs to the DOK family. Type B subfamily.</text>
</comment>
<comment type="sequence caution" evidence="5">
    <conflict type="erroneous initiation">
        <sequence resource="EMBL-CDS" id="BAB71577"/>
    </conflict>
</comment>
<evidence type="ECO:0000250" key="1"/>
<evidence type="ECO:0000255" key="2">
    <source>
        <dbReference type="PROSITE-ProRule" id="PRU00389"/>
    </source>
</evidence>
<evidence type="ECO:0000256" key="3">
    <source>
        <dbReference type="SAM" id="MobiDB-lite"/>
    </source>
</evidence>
<evidence type="ECO:0000269" key="4">
    <source>
    </source>
</evidence>
<evidence type="ECO:0000305" key="5"/>
<name>DOK6_HUMAN</name>
<gene>
    <name type="primary">DOK6</name>
    <name type="synonym">DOK5L</name>
</gene>
<proteinExistence type="evidence at protein level"/>
<organism>
    <name type="scientific">Homo sapiens</name>
    <name type="common">Human</name>
    <dbReference type="NCBI Taxonomy" id="9606"/>
    <lineage>
        <taxon>Eukaryota</taxon>
        <taxon>Metazoa</taxon>
        <taxon>Chordata</taxon>
        <taxon>Craniata</taxon>
        <taxon>Vertebrata</taxon>
        <taxon>Euteleostomi</taxon>
        <taxon>Mammalia</taxon>
        <taxon>Eutheria</taxon>
        <taxon>Euarchontoglires</taxon>
        <taxon>Primates</taxon>
        <taxon>Haplorrhini</taxon>
        <taxon>Catarrhini</taxon>
        <taxon>Hominidae</taxon>
        <taxon>Homo</taxon>
    </lineage>
</organism>
<dbReference type="EMBL" id="AY599248">
    <property type="protein sequence ID" value="AAT09770.1"/>
    <property type="molecule type" value="mRNA"/>
</dbReference>
<dbReference type="EMBL" id="AC026585">
    <property type="status" value="NOT_ANNOTATED_CDS"/>
    <property type="molecule type" value="Genomic_DNA"/>
</dbReference>
<dbReference type="EMBL" id="CH471117">
    <property type="protein sequence ID" value="EAW66514.1"/>
    <property type="molecule type" value="Genomic_DNA"/>
</dbReference>
<dbReference type="EMBL" id="BC008583">
    <property type="protein sequence ID" value="AAH08583.3"/>
    <property type="molecule type" value="mRNA"/>
</dbReference>
<dbReference type="EMBL" id="BC019045">
    <property type="protein sequence ID" value="AAH19045.2"/>
    <property type="molecule type" value="mRNA"/>
</dbReference>
<dbReference type="EMBL" id="BC096744">
    <property type="protein sequence ID" value="AAH96744.1"/>
    <property type="molecule type" value="mRNA"/>
</dbReference>
<dbReference type="EMBL" id="AK057795">
    <property type="protein sequence ID" value="BAB71577.1"/>
    <property type="status" value="ALT_INIT"/>
    <property type="molecule type" value="mRNA"/>
</dbReference>
<dbReference type="CCDS" id="CCDS32841.1"/>
<dbReference type="RefSeq" id="NP_689934.2">
    <property type="nucleotide sequence ID" value="NM_152721.5"/>
</dbReference>
<dbReference type="SMR" id="Q6PKX4"/>
<dbReference type="BioGRID" id="128636">
    <property type="interactions" value="23"/>
</dbReference>
<dbReference type="FunCoup" id="Q6PKX4">
    <property type="interactions" value="862"/>
</dbReference>
<dbReference type="IntAct" id="Q6PKX4">
    <property type="interactions" value="21"/>
</dbReference>
<dbReference type="MINT" id="Q6PKX4"/>
<dbReference type="STRING" id="9606.ENSP00000372160"/>
<dbReference type="iPTMnet" id="Q6PKX4"/>
<dbReference type="PhosphoSitePlus" id="Q6PKX4"/>
<dbReference type="BioMuta" id="DOK6"/>
<dbReference type="DMDM" id="84029601"/>
<dbReference type="jPOST" id="Q6PKX4"/>
<dbReference type="MassIVE" id="Q6PKX4"/>
<dbReference type="PaxDb" id="9606-ENSP00000372160"/>
<dbReference type="PeptideAtlas" id="Q6PKX4"/>
<dbReference type="ProteomicsDB" id="67247"/>
<dbReference type="Antibodypedia" id="23216">
    <property type="antibodies" value="169 antibodies from 26 providers"/>
</dbReference>
<dbReference type="DNASU" id="220164"/>
<dbReference type="Ensembl" id="ENST00000382713.10">
    <property type="protein sequence ID" value="ENSP00000372160.5"/>
    <property type="gene ID" value="ENSG00000206052.11"/>
</dbReference>
<dbReference type="GeneID" id="220164"/>
<dbReference type="KEGG" id="hsa:220164"/>
<dbReference type="MANE-Select" id="ENST00000382713.10">
    <property type="protein sequence ID" value="ENSP00000372160.5"/>
    <property type="RefSeq nucleotide sequence ID" value="NM_152721.6"/>
    <property type="RefSeq protein sequence ID" value="NP_689934.2"/>
</dbReference>
<dbReference type="UCSC" id="uc002lkl.4">
    <property type="organism name" value="human"/>
</dbReference>
<dbReference type="AGR" id="HGNC:28301"/>
<dbReference type="CTD" id="220164"/>
<dbReference type="DisGeNET" id="220164"/>
<dbReference type="GeneCards" id="DOK6"/>
<dbReference type="HGNC" id="HGNC:28301">
    <property type="gene designation" value="DOK6"/>
</dbReference>
<dbReference type="HPA" id="ENSG00000206052">
    <property type="expression patterns" value="Tissue enhanced (brain, parathyroid gland, retina)"/>
</dbReference>
<dbReference type="MIM" id="611402">
    <property type="type" value="gene"/>
</dbReference>
<dbReference type="neXtProt" id="NX_Q6PKX4"/>
<dbReference type="OpenTargets" id="ENSG00000206052"/>
<dbReference type="PharmGKB" id="PA134866995"/>
<dbReference type="VEuPathDB" id="HostDB:ENSG00000206052"/>
<dbReference type="eggNOG" id="KOG4047">
    <property type="taxonomic scope" value="Eukaryota"/>
</dbReference>
<dbReference type="GeneTree" id="ENSGT00940000158760"/>
<dbReference type="HOGENOM" id="CLU_057256_0_0_1"/>
<dbReference type="InParanoid" id="Q6PKX4"/>
<dbReference type="OMA" id="FQIFRRC"/>
<dbReference type="OrthoDB" id="6279276at2759"/>
<dbReference type="PAN-GO" id="Q6PKX4">
    <property type="GO annotations" value="3 GO annotations based on evolutionary models"/>
</dbReference>
<dbReference type="PhylomeDB" id="Q6PKX4"/>
<dbReference type="TreeFam" id="TF324994"/>
<dbReference type="PathwayCommons" id="Q6PKX4"/>
<dbReference type="Reactome" id="R-HSA-8853659">
    <property type="pathway name" value="RET signaling"/>
</dbReference>
<dbReference type="SignaLink" id="Q6PKX4"/>
<dbReference type="SIGNOR" id="Q6PKX4"/>
<dbReference type="BioGRID-ORCS" id="220164">
    <property type="hits" value="6 hits in 1142 CRISPR screens"/>
</dbReference>
<dbReference type="ChiTaRS" id="DOK6">
    <property type="organism name" value="human"/>
</dbReference>
<dbReference type="GenomeRNAi" id="220164"/>
<dbReference type="Pharos" id="Q6PKX4">
    <property type="development level" value="Tbio"/>
</dbReference>
<dbReference type="PRO" id="PR:Q6PKX4"/>
<dbReference type="Proteomes" id="UP000005640">
    <property type="component" value="Chromosome 18"/>
</dbReference>
<dbReference type="RNAct" id="Q6PKX4">
    <property type="molecule type" value="protein"/>
</dbReference>
<dbReference type="Bgee" id="ENSG00000206052">
    <property type="expression patterns" value="Expressed in cortical plate and 154 other cell types or tissues"/>
</dbReference>
<dbReference type="ExpressionAtlas" id="Q6PKX4">
    <property type="expression patterns" value="baseline and differential"/>
</dbReference>
<dbReference type="GO" id="GO:0005737">
    <property type="term" value="C:cytoplasm"/>
    <property type="evidence" value="ECO:0000318"/>
    <property type="project" value="GO_Central"/>
</dbReference>
<dbReference type="GO" id="GO:0005829">
    <property type="term" value="C:cytosol"/>
    <property type="evidence" value="ECO:0000304"/>
    <property type="project" value="Reactome"/>
</dbReference>
<dbReference type="GO" id="GO:0007169">
    <property type="term" value="P:cell surface receptor protein tyrosine kinase signaling pathway"/>
    <property type="evidence" value="ECO:0000318"/>
    <property type="project" value="GO_Central"/>
</dbReference>
<dbReference type="CDD" id="cd14678">
    <property type="entry name" value="PH_DOK4_DOK5_DOK6"/>
    <property type="match status" value="1"/>
</dbReference>
<dbReference type="CDD" id="cd13164">
    <property type="entry name" value="PTB_DOK4_DOK5_DOK6"/>
    <property type="match status" value="1"/>
</dbReference>
<dbReference type="FunFam" id="2.30.29.30:FF:000110">
    <property type="entry name" value="Docking protein 4"/>
    <property type="match status" value="1"/>
</dbReference>
<dbReference type="FunFam" id="2.30.29.30:FF:000082">
    <property type="entry name" value="Docking protein 5"/>
    <property type="match status" value="1"/>
</dbReference>
<dbReference type="Gene3D" id="2.30.29.30">
    <property type="entry name" value="Pleckstrin-homology domain (PH domain)/Phosphotyrosine-binding domain (PTB)"/>
    <property type="match status" value="2"/>
</dbReference>
<dbReference type="InterPro" id="IPR050996">
    <property type="entry name" value="Docking_Protein_DOK"/>
</dbReference>
<dbReference type="InterPro" id="IPR037816">
    <property type="entry name" value="DOK4/5/6_PH"/>
</dbReference>
<dbReference type="InterPro" id="IPR002404">
    <property type="entry name" value="IRS_PTB"/>
</dbReference>
<dbReference type="InterPro" id="IPR011993">
    <property type="entry name" value="PH-like_dom_sf"/>
</dbReference>
<dbReference type="InterPro" id="IPR001849">
    <property type="entry name" value="PH_domain"/>
</dbReference>
<dbReference type="PANTHER" id="PTHR21258:SF43">
    <property type="entry name" value="DOCKING PROTEIN 6"/>
    <property type="match status" value="1"/>
</dbReference>
<dbReference type="PANTHER" id="PTHR21258">
    <property type="entry name" value="DOCKING PROTEIN RELATED"/>
    <property type="match status" value="1"/>
</dbReference>
<dbReference type="Pfam" id="PF02174">
    <property type="entry name" value="IRS"/>
    <property type="match status" value="1"/>
</dbReference>
<dbReference type="Pfam" id="PF00169">
    <property type="entry name" value="PH"/>
    <property type="match status" value="1"/>
</dbReference>
<dbReference type="SMART" id="SM01244">
    <property type="entry name" value="IRS"/>
    <property type="match status" value="1"/>
</dbReference>
<dbReference type="SMART" id="SM00233">
    <property type="entry name" value="PH"/>
    <property type="match status" value="1"/>
</dbReference>
<dbReference type="SMART" id="SM00310">
    <property type="entry name" value="PTBI"/>
    <property type="match status" value="1"/>
</dbReference>
<dbReference type="SUPFAM" id="SSF50729">
    <property type="entry name" value="PH domain-like"/>
    <property type="match status" value="2"/>
</dbReference>
<dbReference type="PROSITE" id="PS51064">
    <property type="entry name" value="IRS_PTB"/>
    <property type="match status" value="1"/>
</dbReference>
<sequence>MASNFNDIVKQGYVKIRSRKLGIFRRCWLVFKKASSKGPRRLEKFPDEKAAYFRNFHKVTELHNIKNITRLPRETKKHAVAIIFHDETSKTFACESELEAEEWCKHLCMECLGTRLNDISLGEPDLLAAGVQREQNERFNVYLMPTPNLDIYGECTMQITHENIYLWDIHNAKVKLVMWPLSSLRRYGRDSTWFTFESGRMCDTGEGLFTFQTREGEMIYQKVHSATLAIAEQHERLMLEMEQKARLQTSLTEPMTLSKSISLPRSAYWHHITRQNSVGEIYSLQGHGFGSSKMSRAQTFPSYAPEQSEEAQQPLSRSSSYGFSYSSSLIQ</sequence>
<reference key="1">
    <citation type="journal article" date="2004" name="J. Biol. Chem.">
        <title>Dok-6, a novel p62 Dok family member, promotes Ret-mediated neurite outgrowth.</title>
        <authorList>
            <person name="Crowder R.J."/>
            <person name="Enomoto H."/>
            <person name="Yang M."/>
            <person name="Johnson E.M. Jr."/>
            <person name="Milbrandt J."/>
        </authorList>
    </citation>
    <scope>NUCLEOTIDE SEQUENCE [MRNA]</scope>
    <scope>FUNCTION</scope>
    <scope>INTERACTION WITH RET</scope>
    <scope>PHOSPHORYLATION AT TYROSINE RESIDUES</scope>
    <scope>TISSUE SPECIFICITY</scope>
</reference>
<reference key="2">
    <citation type="journal article" date="2005" name="Nature">
        <title>DNA sequence and analysis of human chromosome 18.</title>
        <authorList>
            <person name="Nusbaum C."/>
            <person name="Zody M.C."/>
            <person name="Borowsky M.L."/>
            <person name="Kamal M."/>
            <person name="Kodira C.D."/>
            <person name="Taylor T.D."/>
            <person name="Whittaker C.A."/>
            <person name="Chang J.L."/>
            <person name="Cuomo C.A."/>
            <person name="Dewar K."/>
            <person name="FitzGerald M.G."/>
            <person name="Yang X."/>
            <person name="Abouelleil A."/>
            <person name="Allen N.R."/>
            <person name="Anderson S."/>
            <person name="Bloom T."/>
            <person name="Bugalter B."/>
            <person name="Butler J."/>
            <person name="Cook A."/>
            <person name="DeCaprio D."/>
            <person name="Engels R."/>
            <person name="Garber M."/>
            <person name="Gnirke A."/>
            <person name="Hafez N."/>
            <person name="Hall J.L."/>
            <person name="Norman C.H."/>
            <person name="Itoh T."/>
            <person name="Jaffe D.B."/>
            <person name="Kuroki Y."/>
            <person name="Lehoczky J."/>
            <person name="Lui A."/>
            <person name="Macdonald P."/>
            <person name="Mauceli E."/>
            <person name="Mikkelsen T.S."/>
            <person name="Naylor J.W."/>
            <person name="Nicol R."/>
            <person name="Nguyen C."/>
            <person name="Noguchi H."/>
            <person name="O'Leary S.B."/>
            <person name="Piqani B."/>
            <person name="Smith C.L."/>
            <person name="Talamas J.A."/>
            <person name="Topham K."/>
            <person name="Totoki Y."/>
            <person name="Toyoda A."/>
            <person name="Wain H.M."/>
            <person name="Young S.K."/>
            <person name="Zeng Q."/>
            <person name="Zimmer A.R."/>
            <person name="Fujiyama A."/>
            <person name="Hattori M."/>
            <person name="Birren B.W."/>
            <person name="Sakaki Y."/>
            <person name="Lander E.S."/>
        </authorList>
    </citation>
    <scope>NUCLEOTIDE SEQUENCE [LARGE SCALE GENOMIC DNA]</scope>
</reference>
<reference key="3">
    <citation type="submission" date="2005-07" db="EMBL/GenBank/DDBJ databases">
        <authorList>
            <person name="Mural R.J."/>
            <person name="Istrail S."/>
            <person name="Sutton G.G."/>
            <person name="Florea L."/>
            <person name="Halpern A.L."/>
            <person name="Mobarry C.M."/>
            <person name="Lippert R."/>
            <person name="Walenz B."/>
            <person name="Shatkay H."/>
            <person name="Dew I."/>
            <person name="Miller J.R."/>
            <person name="Flanigan M.J."/>
            <person name="Edwards N.J."/>
            <person name="Bolanos R."/>
            <person name="Fasulo D."/>
            <person name="Halldorsson B.V."/>
            <person name="Hannenhalli S."/>
            <person name="Turner R."/>
            <person name="Yooseph S."/>
            <person name="Lu F."/>
            <person name="Nusskern D.R."/>
            <person name="Shue B.C."/>
            <person name="Zheng X.H."/>
            <person name="Zhong F."/>
            <person name="Delcher A.L."/>
            <person name="Huson D.H."/>
            <person name="Kravitz S.A."/>
            <person name="Mouchard L."/>
            <person name="Reinert K."/>
            <person name="Remington K.A."/>
            <person name="Clark A.G."/>
            <person name="Waterman M.S."/>
            <person name="Eichler E.E."/>
            <person name="Adams M.D."/>
            <person name="Hunkapiller M.W."/>
            <person name="Myers E.W."/>
            <person name="Venter J.C."/>
        </authorList>
    </citation>
    <scope>NUCLEOTIDE SEQUENCE [LARGE SCALE GENOMIC DNA]</scope>
</reference>
<reference key="4">
    <citation type="journal article" date="2004" name="Genome Res.">
        <title>The status, quality, and expansion of the NIH full-length cDNA project: the Mammalian Gene Collection (MGC).</title>
        <authorList>
            <consortium name="The MGC Project Team"/>
        </authorList>
    </citation>
    <scope>NUCLEOTIDE SEQUENCE [LARGE SCALE MRNA]</scope>
    <source>
        <tissue>Brain</tissue>
        <tissue>Eye</tissue>
        <tissue>Hippocampus</tissue>
    </source>
</reference>
<reference key="5">
    <citation type="journal article" date="2004" name="Nat. Genet.">
        <title>Complete sequencing and characterization of 21,243 full-length human cDNAs.</title>
        <authorList>
            <person name="Ota T."/>
            <person name="Suzuki Y."/>
            <person name="Nishikawa T."/>
            <person name="Otsuki T."/>
            <person name="Sugiyama T."/>
            <person name="Irie R."/>
            <person name="Wakamatsu A."/>
            <person name="Hayashi K."/>
            <person name="Sato H."/>
            <person name="Nagai K."/>
            <person name="Kimura K."/>
            <person name="Makita H."/>
            <person name="Sekine M."/>
            <person name="Obayashi M."/>
            <person name="Nishi T."/>
            <person name="Shibahara T."/>
            <person name="Tanaka T."/>
            <person name="Ishii S."/>
            <person name="Yamamoto J."/>
            <person name="Saito K."/>
            <person name="Kawai Y."/>
            <person name="Isono Y."/>
            <person name="Nakamura Y."/>
            <person name="Nagahari K."/>
            <person name="Murakami K."/>
            <person name="Yasuda T."/>
            <person name="Iwayanagi T."/>
            <person name="Wagatsuma M."/>
            <person name="Shiratori A."/>
            <person name="Sudo H."/>
            <person name="Hosoiri T."/>
            <person name="Kaku Y."/>
            <person name="Kodaira H."/>
            <person name="Kondo H."/>
            <person name="Sugawara M."/>
            <person name="Takahashi M."/>
            <person name="Kanda K."/>
            <person name="Yokoi T."/>
            <person name="Furuya T."/>
            <person name="Kikkawa E."/>
            <person name="Omura Y."/>
            <person name="Abe K."/>
            <person name="Kamihara K."/>
            <person name="Katsuta N."/>
            <person name="Sato K."/>
            <person name="Tanikawa M."/>
            <person name="Yamazaki M."/>
            <person name="Ninomiya K."/>
            <person name="Ishibashi T."/>
            <person name="Yamashita H."/>
            <person name="Murakawa K."/>
            <person name="Fujimori K."/>
            <person name="Tanai H."/>
            <person name="Kimata M."/>
            <person name="Watanabe M."/>
            <person name="Hiraoka S."/>
            <person name="Chiba Y."/>
            <person name="Ishida S."/>
            <person name="Ono Y."/>
            <person name="Takiguchi S."/>
            <person name="Watanabe S."/>
            <person name="Yosida M."/>
            <person name="Hotuta T."/>
            <person name="Kusano J."/>
            <person name="Kanehori K."/>
            <person name="Takahashi-Fujii A."/>
            <person name="Hara H."/>
            <person name="Tanase T.-O."/>
            <person name="Nomura Y."/>
            <person name="Togiya S."/>
            <person name="Komai F."/>
            <person name="Hara R."/>
            <person name="Takeuchi K."/>
            <person name="Arita M."/>
            <person name="Imose N."/>
            <person name="Musashino K."/>
            <person name="Yuuki H."/>
            <person name="Oshima A."/>
            <person name="Sasaki N."/>
            <person name="Aotsuka S."/>
            <person name="Yoshikawa Y."/>
            <person name="Matsunawa H."/>
            <person name="Ichihara T."/>
            <person name="Shiohata N."/>
            <person name="Sano S."/>
            <person name="Moriya S."/>
            <person name="Momiyama H."/>
            <person name="Satoh N."/>
            <person name="Takami S."/>
            <person name="Terashima Y."/>
            <person name="Suzuki O."/>
            <person name="Nakagawa S."/>
            <person name="Senoh A."/>
            <person name="Mizoguchi H."/>
            <person name="Goto Y."/>
            <person name="Shimizu F."/>
            <person name="Wakebe H."/>
            <person name="Hishigaki H."/>
            <person name="Watanabe T."/>
            <person name="Sugiyama A."/>
            <person name="Takemoto M."/>
            <person name="Kawakami B."/>
            <person name="Yamazaki M."/>
            <person name="Watanabe K."/>
            <person name="Kumagai A."/>
            <person name="Itakura S."/>
            <person name="Fukuzumi Y."/>
            <person name="Fujimori Y."/>
            <person name="Komiyama M."/>
            <person name="Tashiro H."/>
            <person name="Tanigami A."/>
            <person name="Fujiwara T."/>
            <person name="Ono T."/>
            <person name="Yamada K."/>
            <person name="Fujii Y."/>
            <person name="Ozaki K."/>
            <person name="Hirao M."/>
            <person name="Ohmori Y."/>
            <person name="Kawabata A."/>
            <person name="Hikiji T."/>
            <person name="Kobatake N."/>
            <person name="Inagaki H."/>
            <person name="Ikema Y."/>
            <person name="Okamoto S."/>
            <person name="Okitani R."/>
            <person name="Kawakami T."/>
            <person name="Noguchi S."/>
            <person name="Itoh T."/>
            <person name="Shigeta K."/>
            <person name="Senba T."/>
            <person name="Matsumura K."/>
            <person name="Nakajima Y."/>
            <person name="Mizuno T."/>
            <person name="Morinaga M."/>
            <person name="Sasaki M."/>
            <person name="Togashi T."/>
            <person name="Oyama M."/>
            <person name="Hata H."/>
            <person name="Watanabe M."/>
            <person name="Komatsu T."/>
            <person name="Mizushima-Sugano J."/>
            <person name="Satoh T."/>
            <person name="Shirai Y."/>
            <person name="Takahashi Y."/>
            <person name="Nakagawa K."/>
            <person name="Okumura K."/>
            <person name="Nagase T."/>
            <person name="Nomura N."/>
            <person name="Kikuchi H."/>
            <person name="Masuho Y."/>
            <person name="Yamashita R."/>
            <person name="Nakai K."/>
            <person name="Yada T."/>
            <person name="Nakamura Y."/>
            <person name="Ohara O."/>
            <person name="Isogai T."/>
            <person name="Sugano S."/>
        </authorList>
    </citation>
    <scope>NUCLEOTIDE SEQUENCE [LARGE SCALE MRNA] OF 33-331</scope>
    <source>
        <tissue>Cerebellum</tissue>
    </source>
</reference>